<accession>Q31I33</accession>
<protein>
    <recommendedName>
        <fullName evidence="1">Dephospho-CoA kinase</fullName>
        <ecNumber evidence="1">2.7.1.24</ecNumber>
    </recommendedName>
    <alternativeName>
        <fullName evidence="1">Dephosphocoenzyme A kinase</fullName>
    </alternativeName>
</protein>
<evidence type="ECO:0000255" key="1">
    <source>
        <dbReference type="HAMAP-Rule" id="MF_00376"/>
    </source>
</evidence>
<organism>
    <name type="scientific">Hydrogenovibrio crunogenus (strain DSM 25203 / XCL-2)</name>
    <name type="common">Thiomicrospira crunogena</name>
    <dbReference type="NCBI Taxonomy" id="317025"/>
    <lineage>
        <taxon>Bacteria</taxon>
        <taxon>Pseudomonadati</taxon>
        <taxon>Pseudomonadota</taxon>
        <taxon>Gammaproteobacteria</taxon>
        <taxon>Thiotrichales</taxon>
        <taxon>Piscirickettsiaceae</taxon>
        <taxon>Hydrogenovibrio</taxon>
    </lineage>
</organism>
<reference key="1">
    <citation type="journal article" date="2006" name="PLoS Biol.">
        <title>The genome of deep-sea vent chemolithoautotroph Thiomicrospira crunogena XCL-2.</title>
        <authorList>
            <person name="Scott K.M."/>
            <person name="Sievert S.M."/>
            <person name="Abril F.N."/>
            <person name="Ball L.A."/>
            <person name="Barrett C.J."/>
            <person name="Blake R.A."/>
            <person name="Boller A.J."/>
            <person name="Chain P.S.G."/>
            <person name="Clark J.A."/>
            <person name="Davis C.R."/>
            <person name="Detter C."/>
            <person name="Do K.F."/>
            <person name="Dobrinski K.P."/>
            <person name="Faza B.I."/>
            <person name="Fitzpatrick K.A."/>
            <person name="Freyermuth S.K."/>
            <person name="Harmer T.L."/>
            <person name="Hauser L.J."/>
            <person name="Huegler M."/>
            <person name="Kerfeld C.A."/>
            <person name="Klotz M.G."/>
            <person name="Kong W.W."/>
            <person name="Land M."/>
            <person name="Lapidus A."/>
            <person name="Larimer F.W."/>
            <person name="Longo D.L."/>
            <person name="Lucas S."/>
            <person name="Malfatti S.A."/>
            <person name="Massey S.E."/>
            <person name="Martin D.D."/>
            <person name="McCuddin Z."/>
            <person name="Meyer F."/>
            <person name="Moore J.L."/>
            <person name="Ocampo L.H. Jr."/>
            <person name="Paul J.H."/>
            <person name="Paulsen I.T."/>
            <person name="Reep D.K."/>
            <person name="Ren Q."/>
            <person name="Ross R.L."/>
            <person name="Sato P.Y."/>
            <person name="Thomas P."/>
            <person name="Tinkham L.E."/>
            <person name="Zeruth G.T."/>
        </authorList>
    </citation>
    <scope>NUCLEOTIDE SEQUENCE [LARGE SCALE GENOMIC DNA]</scope>
    <source>
        <strain>DSM 25203 / XCL-2</strain>
    </source>
</reference>
<gene>
    <name evidence="1" type="primary">coaE</name>
    <name type="ordered locus">Tcr_0594</name>
</gene>
<dbReference type="EC" id="2.7.1.24" evidence="1"/>
<dbReference type="EMBL" id="CP000109">
    <property type="protein sequence ID" value="ABB41190.1"/>
    <property type="molecule type" value="Genomic_DNA"/>
</dbReference>
<dbReference type="SMR" id="Q31I33"/>
<dbReference type="STRING" id="317025.Tcr_0594"/>
<dbReference type="KEGG" id="tcx:Tcr_0594"/>
<dbReference type="eggNOG" id="COG0237">
    <property type="taxonomic scope" value="Bacteria"/>
</dbReference>
<dbReference type="HOGENOM" id="CLU_057180_1_2_6"/>
<dbReference type="OrthoDB" id="9812943at2"/>
<dbReference type="UniPathway" id="UPA00241">
    <property type="reaction ID" value="UER00356"/>
</dbReference>
<dbReference type="GO" id="GO:0005737">
    <property type="term" value="C:cytoplasm"/>
    <property type="evidence" value="ECO:0007669"/>
    <property type="project" value="UniProtKB-SubCell"/>
</dbReference>
<dbReference type="GO" id="GO:0005524">
    <property type="term" value="F:ATP binding"/>
    <property type="evidence" value="ECO:0007669"/>
    <property type="project" value="UniProtKB-UniRule"/>
</dbReference>
<dbReference type="GO" id="GO:0004140">
    <property type="term" value="F:dephospho-CoA kinase activity"/>
    <property type="evidence" value="ECO:0007669"/>
    <property type="project" value="UniProtKB-UniRule"/>
</dbReference>
<dbReference type="GO" id="GO:0015937">
    <property type="term" value="P:coenzyme A biosynthetic process"/>
    <property type="evidence" value="ECO:0007669"/>
    <property type="project" value="UniProtKB-UniRule"/>
</dbReference>
<dbReference type="CDD" id="cd02022">
    <property type="entry name" value="DPCK"/>
    <property type="match status" value="1"/>
</dbReference>
<dbReference type="Gene3D" id="3.40.50.300">
    <property type="entry name" value="P-loop containing nucleotide triphosphate hydrolases"/>
    <property type="match status" value="1"/>
</dbReference>
<dbReference type="HAMAP" id="MF_00376">
    <property type="entry name" value="Dephospho_CoA_kinase"/>
    <property type="match status" value="1"/>
</dbReference>
<dbReference type="InterPro" id="IPR001977">
    <property type="entry name" value="Depp_CoAkinase"/>
</dbReference>
<dbReference type="InterPro" id="IPR027417">
    <property type="entry name" value="P-loop_NTPase"/>
</dbReference>
<dbReference type="NCBIfam" id="TIGR00152">
    <property type="entry name" value="dephospho-CoA kinase"/>
    <property type="match status" value="1"/>
</dbReference>
<dbReference type="PANTHER" id="PTHR10695:SF46">
    <property type="entry name" value="BIFUNCTIONAL COENZYME A SYNTHASE-RELATED"/>
    <property type="match status" value="1"/>
</dbReference>
<dbReference type="PANTHER" id="PTHR10695">
    <property type="entry name" value="DEPHOSPHO-COA KINASE-RELATED"/>
    <property type="match status" value="1"/>
</dbReference>
<dbReference type="Pfam" id="PF01121">
    <property type="entry name" value="CoaE"/>
    <property type="match status" value="1"/>
</dbReference>
<dbReference type="SUPFAM" id="SSF52540">
    <property type="entry name" value="P-loop containing nucleoside triphosphate hydrolases"/>
    <property type="match status" value="1"/>
</dbReference>
<dbReference type="PROSITE" id="PS51219">
    <property type="entry name" value="DPCK"/>
    <property type="match status" value="1"/>
</dbReference>
<keyword id="KW-0067">ATP-binding</keyword>
<keyword id="KW-0173">Coenzyme A biosynthesis</keyword>
<keyword id="KW-0963">Cytoplasm</keyword>
<keyword id="KW-0418">Kinase</keyword>
<keyword id="KW-0547">Nucleotide-binding</keyword>
<keyword id="KW-0808">Transferase</keyword>
<name>COAE_HYDCU</name>
<proteinExistence type="inferred from homology"/>
<feature type="chain" id="PRO_0000243360" description="Dephospho-CoA kinase">
    <location>
        <begin position="1"/>
        <end position="197"/>
    </location>
</feature>
<feature type="domain" description="DPCK" evidence="1">
    <location>
        <begin position="3"/>
        <end position="197"/>
    </location>
</feature>
<feature type="binding site" evidence="1">
    <location>
        <begin position="11"/>
        <end position="16"/>
    </location>
    <ligand>
        <name>ATP</name>
        <dbReference type="ChEBI" id="CHEBI:30616"/>
    </ligand>
</feature>
<comment type="function">
    <text evidence="1">Catalyzes the phosphorylation of the 3'-hydroxyl group of dephosphocoenzyme A to form coenzyme A.</text>
</comment>
<comment type="catalytic activity">
    <reaction evidence="1">
        <text>3'-dephospho-CoA + ATP = ADP + CoA + H(+)</text>
        <dbReference type="Rhea" id="RHEA:18245"/>
        <dbReference type="ChEBI" id="CHEBI:15378"/>
        <dbReference type="ChEBI" id="CHEBI:30616"/>
        <dbReference type="ChEBI" id="CHEBI:57287"/>
        <dbReference type="ChEBI" id="CHEBI:57328"/>
        <dbReference type="ChEBI" id="CHEBI:456216"/>
        <dbReference type="EC" id="2.7.1.24"/>
    </reaction>
</comment>
<comment type="pathway">
    <text evidence="1">Cofactor biosynthesis; coenzyme A biosynthesis; CoA from (R)-pantothenate: step 5/5.</text>
</comment>
<comment type="subcellular location">
    <subcellularLocation>
        <location evidence="1">Cytoplasm</location>
    </subcellularLocation>
</comment>
<comment type="similarity">
    <text evidence="1">Belongs to the CoaE family.</text>
</comment>
<sequence length="197" mass="22038">MKVYGLTGGIGSGKTTVRQLFEDEGVPTLDADQIAREVVAKNQPGLAEIERTFGSDYLTNGELNRAKLRELIFNDASAKQALEAILHPLIRQRTEQLIQQLKKQHPPAIVVEIPLLTETGKPNYVDEVIVLDLAPETQLKRAITRDQLPAEDIQKIIQQQATRAERLAVADIILNTEQPLETLRKDIQSLLHTHQNT</sequence>